<proteinExistence type="inferred from homology"/>
<reference key="1">
    <citation type="journal article" date="2007" name="Proc. Natl. Acad. Sci. U.S.A.">
        <title>Genome sequencing and comparative analysis of Saccharomyces cerevisiae strain YJM789.</title>
        <authorList>
            <person name="Wei W."/>
            <person name="McCusker J.H."/>
            <person name="Hyman R.W."/>
            <person name="Jones T."/>
            <person name="Ning Y."/>
            <person name="Cao Z."/>
            <person name="Gu Z."/>
            <person name="Bruno D."/>
            <person name="Miranda M."/>
            <person name="Nguyen M."/>
            <person name="Wilhelmy J."/>
            <person name="Komp C."/>
            <person name="Tamse R."/>
            <person name="Wang X."/>
            <person name="Jia P."/>
            <person name="Luedi P."/>
            <person name="Oefner P.J."/>
            <person name="David L."/>
            <person name="Dietrich F.S."/>
            <person name="Li Y."/>
            <person name="Davis R.W."/>
            <person name="Steinmetz L.M."/>
        </authorList>
    </citation>
    <scope>NUCLEOTIDE SEQUENCE [LARGE SCALE GENOMIC DNA]</scope>
    <source>
        <strain>YJM789</strain>
    </source>
</reference>
<comment type="subunit">
    <text evidence="1">Component of the mitochondrial small ribosomal subunit. Mature mitochondrial ribosomes consist of a small (37S) and a large (54S) subunit. The 37S subunit contains at least 33 different proteins and 1 molecule of RNA (15S). The 54S subunit contains at least 45 different proteins and 1 molecule of RNA (21S) (By similarity).</text>
</comment>
<comment type="subcellular location">
    <subcellularLocation>
        <location evidence="1">Mitochondrion</location>
    </subcellularLocation>
</comment>
<comment type="similarity">
    <text evidence="3">Belongs to the bacterial ribosomal protein bS18 family.</text>
</comment>
<name>RSM18_YEAS7</name>
<organism>
    <name type="scientific">Saccharomyces cerevisiae (strain YJM789)</name>
    <name type="common">Baker's yeast</name>
    <dbReference type="NCBI Taxonomy" id="307796"/>
    <lineage>
        <taxon>Eukaryota</taxon>
        <taxon>Fungi</taxon>
        <taxon>Dikarya</taxon>
        <taxon>Ascomycota</taxon>
        <taxon>Saccharomycotina</taxon>
        <taxon>Saccharomycetes</taxon>
        <taxon>Saccharomycetales</taxon>
        <taxon>Saccharomycetaceae</taxon>
        <taxon>Saccharomyces</taxon>
    </lineage>
</organism>
<sequence>MQPIIKGAVSSTFKRALYNFGIKEKKSVNIEMGRTQQTKKIDQSLSKKLPKGTIYDPFDFSMGRIHLDRKYQANKNSNRNDIMKSGANPLEFYARPRILSRYVTSTGRIQHRDITGLSAKNQRRLSKAIRRCQAIGLM</sequence>
<evidence type="ECO:0000250" key="1"/>
<evidence type="ECO:0000255" key="2"/>
<evidence type="ECO:0000305" key="3"/>
<accession>A6ZR01</accession>
<keyword id="KW-0496">Mitochondrion</keyword>
<keyword id="KW-0687">Ribonucleoprotein</keyword>
<keyword id="KW-0689">Ribosomal protein</keyword>
<keyword id="KW-0809">Transit peptide</keyword>
<feature type="transit peptide" description="Mitochondrion" evidence="2">
    <location>
        <begin position="1"/>
        <end status="unknown"/>
    </location>
</feature>
<feature type="chain" id="PRO_0000377631" description="Small ribosomal subunit protein bS18m">
    <location>
        <begin status="unknown"/>
        <end position="138"/>
    </location>
</feature>
<dbReference type="EMBL" id="AAFW02000048">
    <property type="protein sequence ID" value="EDN63021.1"/>
    <property type="molecule type" value="Genomic_DNA"/>
</dbReference>
<dbReference type="SMR" id="A6ZR01"/>
<dbReference type="HOGENOM" id="CLU_082177_2_0_1"/>
<dbReference type="Proteomes" id="UP000007060">
    <property type="component" value="Unassembled WGS sequence"/>
</dbReference>
<dbReference type="GO" id="GO:0005763">
    <property type="term" value="C:mitochondrial small ribosomal subunit"/>
    <property type="evidence" value="ECO:0007669"/>
    <property type="project" value="TreeGrafter"/>
</dbReference>
<dbReference type="GO" id="GO:0070181">
    <property type="term" value="F:small ribosomal subunit rRNA binding"/>
    <property type="evidence" value="ECO:0007669"/>
    <property type="project" value="TreeGrafter"/>
</dbReference>
<dbReference type="GO" id="GO:0003735">
    <property type="term" value="F:structural constituent of ribosome"/>
    <property type="evidence" value="ECO:0007669"/>
    <property type="project" value="InterPro"/>
</dbReference>
<dbReference type="GO" id="GO:0032543">
    <property type="term" value="P:mitochondrial translation"/>
    <property type="evidence" value="ECO:0007669"/>
    <property type="project" value="TreeGrafter"/>
</dbReference>
<dbReference type="FunFam" id="4.10.640.10:FF:000020">
    <property type="entry name" value="37S ribosomal protein RSM18, mitochondrial"/>
    <property type="match status" value="1"/>
</dbReference>
<dbReference type="Gene3D" id="4.10.640.10">
    <property type="entry name" value="Ribosomal protein S18"/>
    <property type="match status" value="1"/>
</dbReference>
<dbReference type="InterPro" id="IPR001648">
    <property type="entry name" value="Ribosomal_bS18"/>
</dbReference>
<dbReference type="InterPro" id="IPR036870">
    <property type="entry name" value="Ribosomal_bS18_sf"/>
</dbReference>
<dbReference type="PANTHER" id="PTHR13479">
    <property type="entry name" value="30S RIBOSOMAL PROTEIN S18"/>
    <property type="match status" value="1"/>
</dbReference>
<dbReference type="PANTHER" id="PTHR13479:SF40">
    <property type="entry name" value="SMALL RIBOSOMAL SUBUNIT PROTEIN BS18M"/>
    <property type="match status" value="1"/>
</dbReference>
<dbReference type="Pfam" id="PF01084">
    <property type="entry name" value="Ribosomal_S18"/>
    <property type="match status" value="1"/>
</dbReference>
<dbReference type="PRINTS" id="PR00974">
    <property type="entry name" value="RIBOSOMALS18"/>
</dbReference>
<dbReference type="SUPFAM" id="SSF46911">
    <property type="entry name" value="Ribosomal protein S18"/>
    <property type="match status" value="1"/>
</dbReference>
<gene>
    <name type="primary">RSM18</name>
    <name type="ORF">SCY_1548</name>
</gene>
<protein>
    <recommendedName>
        <fullName evidence="3">Small ribosomal subunit protein bS18m</fullName>
    </recommendedName>
    <alternativeName>
        <fullName>37S ribosomal protein RSM18, mitochondrial</fullName>
    </alternativeName>
</protein>